<protein>
    <recommendedName>
        <fullName evidence="2">Anaerobic nitrite reductase GLB1</fullName>
        <ecNumber evidence="2">1.7.2.-</ecNumber>
    </recommendedName>
    <alternativeName>
        <fullName>HORvu GLB1</fullName>
    </alternativeName>
    <alternativeName>
        <fullName evidence="7">Non-legume hemoglobin</fullName>
    </alternativeName>
    <alternativeName>
        <fullName evidence="7">Non-symbiotic hemoglobin</fullName>
    </alternativeName>
</protein>
<keyword id="KW-0002">3D-structure</keyword>
<keyword id="KW-0963">Cytoplasm</keyword>
<keyword id="KW-0349">Heme</keyword>
<keyword id="KW-0408">Iron</keyword>
<keyword id="KW-0479">Metal-binding</keyword>
<keyword id="KW-0539">Nucleus</keyword>
<keyword id="KW-0560">Oxidoreductase</keyword>
<name>HBL_HORVU</name>
<sequence length="162" mass="18043">MSAAEGAVVFSEEKEALVLKSWAIMKKDSANLGLRFFLKIFEIAPSARQMFPFLRDSDVPLETNPKLKTHAVSVFVMTCEAAAQLRKAGKITVRETTLKRLGGTHLKYGVADGHFEVTRFALLETIKEALPADMWGPEMRNAWGEAYDQLVAAIKQEMKPAE</sequence>
<organism>
    <name type="scientific">Hordeum vulgare</name>
    <name type="common">Barley</name>
    <dbReference type="NCBI Taxonomy" id="4513"/>
    <lineage>
        <taxon>Eukaryota</taxon>
        <taxon>Viridiplantae</taxon>
        <taxon>Streptophyta</taxon>
        <taxon>Embryophyta</taxon>
        <taxon>Tracheophyta</taxon>
        <taxon>Spermatophyta</taxon>
        <taxon>Magnoliopsida</taxon>
        <taxon>Liliopsida</taxon>
        <taxon>Poales</taxon>
        <taxon>Poaceae</taxon>
        <taxon>BOP clade</taxon>
        <taxon>Pooideae</taxon>
        <taxon>Triticodae</taxon>
        <taxon>Triticeae</taxon>
        <taxon>Hordeinae</taxon>
        <taxon>Hordeum</taxon>
    </lineage>
</organism>
<gene>
    <name evidence="7" type="primary">HB</name>
    <name type="synonym">GLB1</name>
</gene>
<feature type="chain" id="PRO_0000193016" description="Anaerobic nitrite reductase GLB1">
    <location>
        <begin position="1"/>
        <end position="162"/>
    </location>
</feature>
<feature type="domain" description="Globin" evidence="3">
    <location>
        <begin position="9"/>
        <end position="159"/>
    </location>
</feature>
<feature type="short sequence motif" description="Homodimerization" evidence="4 10">
    <location>
        <begin position="42"/>
        <end position="46"/>
    </location>
</feature>
<feature type="short sequence motif" description="Homodimerization" evidence="4 10">
    <location>
        <begin position="112"/>
        <end position="124"/>
    </location>
</feature>
<feature type="binding site" evidence="2">
    <location>
        <position position="66"/>
    </location>
    <ligand>
        <name>heme b</name>
        <dbReference type="ChEBI" id="CHEBI:60344"/>
    </ligand>
</feature>
<feature type="binding site" description="distal binding residue" evidence="3">
    <location>
        <position position="70"/>
    </location>
    <ligand>
        <name>heme b</name>
        <dbReference type="ChEBI" id="CHEBI:60344"/>
    </ligand>
    <ligandPart>
        <name>Fe</name>
        <dbReference type="ChEBI" id="CHEBI:18248"/>
    </ligandPart>
</feature>
<feature type="binding site" evidence="2">
    <location>
        <position position="100"/>
    </location>
    <ligand>
        <name>heme b</name>
        <dbReference type="ChEBI" id="CHEBI:60344"/>
    </ligand>
</feature>
<feature type="binding site" evidence="2">
    <location>
        <position position="104"/>
    </location>
    <ligand>
        <name>heme b</name>
        <dbReference type="ChEBI" id="CHEBI:60344"/>
    </ligand>
</feature>
<feature type="binding site" description="proximal binding residue" evidence="3 4 10">
    <location>
        <position position="105"/>
    </location>
    <ligand>
        <name>heme b</name>
        <dbReference type="ChEBI" id="CHEBI:60344"/>
    </ligand>
    <ligandPart>
        <name>Fe</name>
        <dbReference type="ChEBI" id="CHEBI:18248"/>
    </ligandPart>
</feature>
<feature type="site" description="Homodimerization" evidence="4 10">
    <location>
        <position position="140"/>
    </location>
</feature>
<feature type="helix" evidence="11">
    <location>
        <begin position="15"/>
        <end position="25"/>
    </location>
</feature>
<feature type="helix" evidence="11">
    <location>
        <begin position="26"/>
        <end position="28"/>
    </location>
</feature>
<feature type="helix" evidence="11">
    <location>
        <begin position="29"/>
        <end position="43"/>
    </location>
</feature>
<feature type="helix" evidence="11">
    <location>
        <begin position="45"/>
        <end position="50"/>
    </location>
</feature>
<feature type="helix" evidence="11">
    <location>
        <begin position="52"/>
        <end position="55"/>
    </location>
</feature>
<feature type="helix" evidence="11">
    <location>
        <begin position="61"/>
        <end position="63"/>
    </location>
</feature>
<feature type="helix" evidence="11">
    <location>
        <begin position="65"/>
        <end position="83"/>
    </location>
</feature>
<feature type="helix" evidence="11">
    <location>
        <begin position="85"/>
        <end position="88"/>
    </location>
</feature>
<feature type="strand" evidence="11">
    <location>
        <begin position="94"/>
        <end position="96"/>
    </location>
</feature>
<feature type="helix" evidence="11">
    <location>
        <begin position="98"/>
        <end position="107"/>
    </location>
</feature>
<feature type="helix" evidence="11">
    <location>
        <begin position="112"/>
        <end position="129"/>
    </location>
</feature>
<feature type="helix" evidence="11">
    <location>
        <begin position="132"/>
        <end position="134"/>
    </location>
</feature>
<feature type="helix" evidence="11">
    <location>
        <begin position="137"/>
        <end position="156"/>
    </location>
</feature>
<dbReference type="EC" id="1.7.2.-" evidence="2"/>
<dbReference type="EMBL" id="U01228">
    <property type="protein sequence ID" value="AAA19576.1"/>
    <property type="molecule type" value="mRNA"/>
</dbReference>
<dbReference type="EMBL" id="U94968">
    <property type="protein sequence ID" value="AAB70097.1"/>
    <property type="molecule type" value="Genomic_DNA"/>
</dbReference>
<dbReference type="PIR" id="S46502">
    <property type="entry name" value="S46502"/>
</dbReference>
<dbReference type="PDB" id="2OIF">
    <property type="method" value="X-ray"/>
    <property type="resolution" value="1.80 A"/>
    <property type="chains" value="A/B/C/D/E/F/G/H=1-162"/>
</dbReference>
<dbReference type="PDBsum" id="2OIF"/>
<dbReference type="SMR" id="Q42831"/>
<dbReference type="OMA" id="MGEEFIH"/>
<dbReference type="EvolutionaryTrace" id="Q42831"/>
<dbReference type="GO" id="GO:0005737">
    <property type="term" value="C:cytoplasm"/>
    <property type="evidence" value="ECO:0007669"/>
    <property type="project" value="UniProtKB-SubCell"/>
</dbReference>
<dbReference type="GO" id="GO:0005634">
    <property type="term" value="C:nucleus"/>
    <property type="evidence" value="ECO:0007669"/>
    <property type="project" value="UniProtKB-SubCell"/>
</dbReference>
<dbReference type="GO" id="GO:0020037">
    <property type="term" value="F:heme binding"/>
    <property type="evidence" value="ECO:0007669"/>
    <property type="project" value="InterPro"/>
</dbReference>
<dbReference type="GO" id="GO:0046872">
    <property type="term" value="F:metal ion binding"/>
    <property type="evidence" value="ECO:0007669"/>
    <property type="project" value="UniProtKB-KW"/>
</dbReference>
<dbReference type="GO" id="GO:0016491">
    <property type="term" value="F:oxidoreductase activity"/>
    <property type="evidence" value="ECO:0007669"/>
    <property type="project" value="UniProtKB-KW"/>
</dbReference>
<dbReference type="GO" id="GO:0019825">
    <property type="term" value="F:oxygen binding"/>
    <property type="evidence" value="ECO:0007669"/>
    <property type="project" value="InterPro"/>
</dbReference>
<dbReference type="CDD" id="cd14784">
    <property type="entry name" value="class1_nsHb-like"/>
    <property type="match status" value="1"/>
</dbReference>
<dbReference type="Gene3D" id="1.10.490.10">
    <property type="entry name" value="Globins"/>
    <property type="match status" value="1"/>
</dbReference>
<dbReference type="InterPro" id="IPR000971">
    <property type="entry name" value="Globin"/>
</dbReference>
<dbReference type="InterPro" id="IPR009050">
    <property type="entry name" value="Globin-like_sf"/>
</dbReference>
<dbReference type="InterPro" id="IPR012292">
    <property type="entry name" value="Globin/Proto"/>
</dbReference>
<dbReference type="InterPro" id="IPR001032">
    <property type="entry name" value="Leghaemoglobin-like"/>
</dbReference>
<dbReference type="InterPro" id="IPR019824">
    <property type="entry name" value="Leghaemoglobin_Fe_BS"/>
</dbReference>
<dbReference type="PANTHER" id="PTHR22924">
    <property type="entry name" value="LEGHEMOGLOBIN-RELATED"/>
    <property type="match status" value="1"/>
</dbReference>
<dbReference type="PANTHER" id="PTHR22924:SF98">
    <property type="entry name" value="NON-SYMBIOTIC HEMOGLOBIN 3"/>
    <property type="match status" value="1"/>
</dbReference>
<dbReference type="Pfam" id="PF00042">
    <property type="entry name" value="Globin"/>
    <property type="match status" value="1"/>
</dbReference>
<dbReference type="PRINTS" id="PR00188">
    <property type="entry name" value="PLANTGLOBIN"/>
</dbReference>
<dbReference type="SUPFAM" id="SSF46458">
    <property type="entry name" value="Globin-like"/>
    <property type="match status" value="1"/>
</dbReference>
<dbReference type="PROSITE" id="PS01033">
    <property type="entry name" value="GLOBIN"/>
    <property type="match status" value="1"/>
</dbReference>
<dbReference type="PROSITE" id="PS00208">
    <property type="entry name" value="PLANT_GLOBIN"/>
    <property type="match status" value="1"/>
</dbReference>
<reference key="1">
    <citation type="journal article" date="1994" name="Plant Mol. Biol.">
        <title>A cereal haemoglobin gene is expressed in seed and root tissues under anaerobic conditions.</title>
        <authorList>
            <person name="Taylor E.R."/>
            <person name="Nie X.Z."/>
            <person name="Macgregor A.W."/>
            <person name="Hill R.D."/>
        </authorList>
    </citation>
    <scope>NUCLEOTIDE SEQUENCE [MRNA]</scope>
    <scope>TISSUE SPECIFICITY</scope>
    <scope>INDUCTION BY ANAEROBIC CONDITIONS</scope>
    <source>
        <strain>cv. Harrington</strain>
        <tissue>Aleurone</tissue>
    </source>
</reference>
<reference key="2">
    <citation type="online journal article" date="1997" name="Plant Gene Register">
        <title>Genomic nucleotide sequence of the barley hemoglobin gene.</title>
        <authorList>
            <person name="Guy P.A."/>
            <person name="Sowa A.W."/>
            <person name="Hill R.D."/>
        </authorList>
        <locator>PGR97-093</locator>
    </citation>
    <scope>NUCLEOTIDE SEQUENCE</scope>
    <source>
        <strain>cv. Harrington</strain>
    </source>
</reference>
<reference key="3">
    <citation type="journal article" date="1997" name="J. Biol. Chem.">
        <title>Expression, purification, and properties of recombinant barley (Hordeum sp.) hemoglobin. Optical spectra and reactions with gaseous ligands.</title>
        <authorList>
            <person name="Duff S.M.G."/>
            <person name="Wittenberg J.B."/>
            <person name="Hill R.D."/>
        </authorList>
    </citation>
    <scope>CHARACTERIZATION</scope>
    <scope>FUNCTION</scope>
    <scope>SUBUNIT</scope>
</reference>
<reference key="4">
    <citation type="journal article" date="2007" name="J. Mol. Biol.">
        <title>Plant hemoglobins: a molecular fossil record for the evolution of oxygen transport.</title>
        <authorList>
            <person name="Hoy J.A."/>
            <person name="Robinson H."/>
            <person name="Trent J.T. III"/>
            <person name="Kakar S."/>
            <person name="Smagghe B.J."/>
            <person name="Hargrove M.S."/>
        </authorList>
    </citation>
    <scope>X-RAY CRYSTALLOGRAPHY (1.8 ANGSTROMS) IN COMPLEX WITH CYANIDE AND HEME B</scope>
    <scope>IRON-BINDING SITES</scope>
    <scope>SUBUNIT</scope>
    <scope>FUNCTION</scope>
    <scope>COFACTOR</scope>
</reference>
<proteinExistence type="evidence at protein level"/>
<comment type="function">
    <text evidence="2 4 6">Phytoglobin that reduces nitrite to nitric oxide (NO) under anoxic conditions (e.g. during flooding or in waterlogged soil) (By similarity). May not function as an oxygen storage or transport protein (PubMed:17560601). Has an unusually high affinity for O(2) through an hexacoordinate heme iron because of a very low dissociation constant (PubMed:17560601, PubMed:9201978).</text>
</comment>
<comment type="catalytic activity">
    <reaction evidence="2">
        <text>Fe(III)-heme b-[protein] + nitric oxide + H2O = Fe(II)-heme b-[protein] + nitrite + 2 H(+)</text>
        <dbReference type="Rhea" id="RHEA:77711"/>
        <dbReference type="Rhea" id="RHEA-COMP:18975"/>
        <dbReference type="Rhea" id="RHEA-COMP:18976"/>
        <dbReference type="ChEBI" id="CHEBI:15377"/>
        <dbReference type="ChEBI" id="CHEBI:15378"/>
        <dbReference type="ChEBI" id="CHEBI:16301"/>
        <dbReference type="ChEBI" id="CHEBI:16480"/>
        <dbReference type="ChEBI" id="CHEBI:55376"/>
        <dbReference type="ChEBI" id="CHEBI:60344"/>
    </reaction>
    <physiologicalReaction direction="right-to-left" evidence="2">
        <dbReference type="Rhea" id="RHEA:77713"/>
    </physiologicalReaction>
</comment>
<comment type="cofactor">
    <cofactor evidence="4">
        <name>heme b</name>
        <dbReference type="ChEBI" id="CHEBI:60344"/>
    </cofactor>
    <text evidence="4">Binds 1 heme group per subunit.</text>
</comment>
<comment type="subunit">
    <text evidence="6 9">Homodimer.</text>
</comment>
<comment type="subcellular location">
    <subcellularLocation>
        <location evidence="1">Cytoplasm</location>
    </subcellularLocation>
    <subcellularLocation>
        <location evidence="1">Nucleus</location>
    </subcellularLocation>
</comment>
<comment type="tissue specificity">
    <text evidence="5">Seeds and roots.</text>
</comment>
<comment type="induction">
    <text evidence="5">Under anaerobic conditions.</text>
</comment>
<comment type="similarity">
    <text evidence="8">Belongs to the plant globin family.</text>
</comment>
<evidence type="ECO:0000250" key="1">
    <source>
        <dbReference type="UniProtKB" id="A2XE98"/>
    </source>
</evidence>
<evidence type="ECO:0000250" key="2">
    <source>
        <dbReference type="UniProtKB" id="O04986"/>
    </source>
</evidence>
<evidence type="ECO:0000255" key="3">
    <source>
        <dbReference type="PROSITE-ProRule" id="PRU00238"/>
    </source>
</evidence>
<evidence type="ECO:0000269" key="4">
    <source>
    </source>
</evidence>
<evidence type="ECO:0000269" key="5">
    <source>
    </source>
</evidence>
<evidence type="ECO:0000269" key="6">
    <source>
    </source>
</evidence>
<evidence type="ECO:0000303" key="7">
    <source>
    </source>
</evidence>
<evidence type="ECO:0000305" key="8"/>
<evidence type="ECO:0000305" key="9">
    <source>
    </source>
</evidence>
<evidence type="ECO:0007744" key="10">
    <source>
        <dbReference type="PDB" id="2OIF"/>
    </source>
</evidence>
<evidence type="ECO:0007829" key="11">
    <source>
        <dbReference type="PDB" id="2OIF"/>
    </source>
</evidence>
<accession>Q42831</accession>
<accession>O04992</accession>